<gene>
    <name evidence="1" type="primary">miaA</name>
    <name type="ordered locus">SH1606</name>
</gene>
<evidence type="ECO:0000255" key="1">
    <source>
        <dbReference type="HAMAP-Rule" id="MF_00185"/>
    </source>
</evidence>
<evidence type="ECO:0000256" key="2">
    <source>
        <dbReference type="SAM" id="MobiDB-lite"/>
    </source>
</evidence>
<proteinExistence type="inferred from homology"/>
<organism>
    <name type="scientific">Staphylococcus haemolyticus (strain JCSC1435)</name>
    <dbReference type="NCBI Taxonomy" id="279808"/>
    <lineage>
        <taxon>Bacteria</taxon>
        <taxon>Bacillati</taxon>
        <taxon>Bacillota</taxon>
        <taxon>Bacilli</taxon>
        <taxon>Bacillales</taxon>
        <taxon>Staphylococcaceae</taxon>
        <taxon>Staphylococcus</taxon>
    </lineage>
</organism>
<accession>Q4L610</accession>
<name>MIAA_STAHJ</name>
<keyword id="KW-0067">ATP-binding</keyword>
<keyword id="KW-0460">Magnesium</keyword>
<keyword id="KW-0547">Nucleotide-binding</keyword>
<keyword id="KW-0808">Transferase</keyword>
<keyword id="KW-0819">tRNA processing</keyword>
<sequence length="332" mass="38174">MSDINKPFLVVIVGPTASGKTELSIELAKQINGEIISGDSMQVYKQMDIGTAKVTNEEMDGIPHYMIDILNPDDSFSVYDFKLRAQALIEDITSRGKIPIIAGGTGLYIQSLIYDYPFDDETVSKEVEQKTQLQLQKLEPLTNQEVHDYLATFDPQSAKDIHPNNRKRVLRAIEYYLNTKKLISSRKKVQQFTENYDTLLIGIEMSRKTLYSRINKRVDIMLGHGLFNEVKNLVEQGYESTQSMQAIGYKELVPVVNGELSIDQAVETLKQHSRQYAKRQLTWFKNKLTVQWFNRETMSLQMMLDEITTQINKRSSKHDCKPQHPRSSTREL</sequence>
<protein>
    <recommendedName>
        <fullName evidence="1">tRNA dimethylallyltransferase</fullName>
        <ecNumber evidence="1">2.5.1.75</ecNumber>
    </recommendedName>
    <alternativeName>
        <fullName evidence="1">Dimethylallyl diphosphate:tRNA dimethylallyltransferase</fullName>
        <shortName evidence="1">DMAPP:tRNA dimethylallyltransferase</shortName>
        <shortName evidence="1">DMATase</shortName>
    </alternativeName>
    <alternativeName>
        <fullName evidence="1">Isopentenyl-diphosphate:tRNA isopentenyltransferase</fullName>
        <shortName evidence="1">IPP transferase</shortName>
        <shortName evidence="1">IPPT</shortName>
        <shortName evidence="1">IPTase</shortName>
    </alternativeName>
</protein>
<feature type="chain" id="PRO_1000020665" description="tRNA dimethylallyltransferase">
    <location>
        <begin position="1"/>
        <end position="332"/>
    </location>
</feature>
<feature type="region of interest" description="Interaction with substrate tRNA" evidence="1">
    <location>
        <begin position="39"/>
        <end position="42"/>
    </location>
</feature>
<feature type="region of interest" description="Disordered" evidence="2">
    <location>
        <begin position="313"/>
        <end position="332"/>
    </location>
</feature>
<feature type="compositionally biased region" description="Basic and acidic residues" evidence="2">
    <location>
        <begin position="317"/>
        <end position="332"/>
    </location>
</feature>
<feature type="binding site" evidence="1">
    <location>
        <begin position="14"/>
        <end position="21"/>
    </location>
    <ligand>
        <name>ATP</name>
        <dbReference type="ChEBI" id="CHEBI:30616"/>
    </ligand>
</feature>
<feature type="binding site" evidence="1">
    <location>
        <begin position="16"/>
        <end position="21"/>
    </location>
    <ligand>
        <name>substrate</name>
    </ligand>
</feature>
<feature type="site" description="Interaction with substrate tRNA" evidence="1">
    <location>
        <position position="105"/>
    </location>
</feature>
<dbReference type="EC" id="2.5.1.75" evidence="1"/>
<dbReference type="EMBL" id="AP006716">
    <property type="protein sequence ID" value="BAE04915.1"/>
    <property type="molecule type" value="Genomic_DNA"/>
</dbReference>
<dbReference type="RefSeq" id="WP_011275896.1">
    <property type="nucleotide sequence ID" value="NC_007168.1"/>
</dbReference>
<dbReference type="SMR" id="Q4L610"/>
<dbReference type="GeneID" id="93780989"/>
<dbReference type="KEGG" id="sha:SH1606"/>
<dbReference type="eggNOG" id="COG0324">
    <property type="taxonomic scope" value="Bacteria"/>
</dbReference>
<dbReference type="HOGENOM" id="CLU_032616_0_1_9"/>
<dbReference type="OrthoDB" id="9776390at2"/>
<dbReference type="Proteomes" id="UP000000543">
    <property type="component" value="Chromosome"/>
</dbReference>
<dbReference type="GO" id="GO:0005524">
    <property type="term" value="F:ATP binding"/>
    <property type="evidence" value="ECO:0007669"/>
    <property type="project" value="UniProtKB-UniRule"/>
</dbReference>
<dbReference type="GO" id="GO:0052381">
    <property type="term" value="F:tRNA dimethylallyltransferase activity"/>
    <property type="evidence" value="ECO:0007669"/>
    <property type="project" value="UniProtKB-UniRule"/>
</dbReference>
<dbReference type="GO" id="GO:0006400">
    <property type="term" value="P:tRNA modification"/>
    <property type="evidence" value="ECO:0007669"/>
    <property type="project" value="TreeGrafter"/>
</dbReference>
<dbReference type="Gene3D" id="1.10.20.140">
    <property type="match status" value="1"/>
</dbReference>
<dbReference type="Gene3D" id="3.40.50.300">
    <property type="entry name" value="P-loop containing nucleotide triphosphate hydrolases"/>
    <property type="match status" value="1"/>
</dbReference>
<dbReference type="HAMAP" id="MF_00185">
    <property type="entry name" value="IPP_trans"/>
    <property type="match status" value="1"/>
</dbReference>
<dbReference type="InterPro" id="IPR039657">
    <property type="entry name" value="Dimethylallyltransferase"/>
</dbReference>
<dbReference type="InterPro" id="IPR018022">
    <property type="entry name" value="IPT"/>
</dbReference>
<dbReference type="InterPro" id="IPR027417">
    <property type="entry name" value="P-loop_NTPase"/>
</dbReference>
<dbReference type="NCBIfam" id="TIGR00174">
    <property type="entry name" value="miaA"/>
    <property type="match status" value="1"/>
</dbReference>
<dbReference type="PANTHER" id="PTHR11088">
    <property type="entry name" value="TRNA DIMETHYLALLYLTRANSFERASE"/>
    <property type="match status" value="1"/>
</dbReference>
<dbReference type="PANTHER" id="PTHR11088:SF60">
    <property type="entry name" value="TRNA DIMETHYLALLYLTRANSFERASE"/>
    <property type="match status" value="1"/>
</dbReference>
<dbReference type="Pfam" id="PF01715">
    <property type="entry name" value="IPPT"/>
    <property type="match status" value="1"/>
</dbReference>
<dbReference type="SUPFAM" id="SSF52540">
    <property type="entry name" value="P-loop containing nucleoside triphosphate hydrolases"/>
    <property type="match status" value="2"/>
</dbReference>
<reference key="1">
    <citation type="journal article" date="2005" name="J. Bacteriol.">
        <title>Whole-genome sequencing of Staphylococcus haemolyticus uncovers the extreme plasticity of its genome and the evolution of human-colonizing staphylococcal species.</title>
        <authorList>
            <person name="Takeuchi F."/>
            <person name="Watanabe S."/>
            <person name="Baba T."/>
            <person name="Yuzawa H."/>
            <person name="Ito T."/>
            <person name="Morimoto Y."/>
            <person name="Kuroda M."/>
            <person name="Cui L."/>
            <person name="Takahashi M."/>
            <person name="Ankai A."/>
            <person name="Baba S."/>
            <person name="Fukui S."/>
            <person name="Lee J.C."/>
            <person name="Hiramatsu K."/>
        </authorList>
    </citation>
    <scope>NUCLEOTIDE SEQUENCE [LARGE SCALE GENOMIC DNA]</scope>
    <source>
        <strain>JCSC1435</strain>
    </source>
</reference>
<comment type="function">
    <text evidence="1">Catalyzes the transfer of a dimethylallyl group onto the adenine at position 37 in tRNAs that read codons beginning with uridine, leading to the formation of N6-(dimethylallyl)adenosine (i(6)A).</text>
</comment>
<comment type="catalytic activity">
    <reaction evidence="1">
        <text>adenosine(37) in tRNA + dimethylallyl diphosphate = N(6)-dimethylallyladenosine(37) in tRNA + diphosphate</text>
        <dbReference type="Rhea" id="RHEA:26482"/>
        <dbReference type="Rhea" id="RHEA-COMP:10162"/>
        <dbReference type="Rhea" id="RHEA-COMP:10375"/>
        <dbReference type="ChEBI" id="CHEBI:33019"/>
        <dbReference type="ChEBI" id="CHEBI:57623"/>
        <dbReference type="ChEBI" id="CHEBI:74411"/>
        <dbReference type="ChEBI" id="CHEBI:74415"/>
        <dbReference type="EC" id="2.5.1.75"/>
    </reaction>
</comment>
<comment type="cofactor">
    <cofactor evidence="1">
        <name>Mg(2+)</name>
        <dbReference type="ChEBI" id="CHEBI:18420"/>
    </cofactor>
</comment>
<comment type="subunit">
    <text evidence="1">Monomer.</text>
</comment>
<comment type="similarity">
    <text evidence="1">Belongs to the IPP transferase family.</text>
</comment>